<organism evidence="3">
    <name type="scientific">Viscum album</name>
    <name type="common">European mistletoe</name>
    <dbReference type="NCBI Taxonomy" id="3972"/>
    <lineage>
        <taxon>Eukaryota</taxon>
        <taxon>Viridiplantae</taxon>
        <taxon>Streptophyta</taxon>
        <taxon>Embryophyta</taxon>
        <taxon>Tracheophyta</taxon>
        <taxon>Spermatophyta</taxon>
        <taxon>Magnoliopsida</taxon>
        <taxon>eudicotyledons</taxon>
        <taxon>Gunneridae</taxon>
        <taxon>Pentapetalae</taxon>
        <taxon>Santalales</taxon>
        <taxon>Viscaceae</taxon>
        <taxon>Viscum</taxon>
    </lineage>
</organism>
<feature type="chain" id="PRO_0000221484" description="Viscotoxin-C1" evidence="1">
    <location>
        <begin position="1"/>
        <end position="46"/>
    </location>
</feature>
<feature type="disulfide bond" evidence="1 5 6">
    <location>
        <begin position="3"/>
        <end position="40"/>
    </location>
</feature>
<feature type="disulfide bond" evidence="1 5 6">
    <location>
        <begin position="4"/>
        <end position="32"/>
    </location>
</feature>
<feature type="disulfide bond" evidence="1 5 6">
    <location>
        <begin position="16"/>
        <end position="26"/>
    </location>
</feature>
<feature type="helix" evidence="7">
    <location>
        <begin position="7"/>
        <end position="19"/>
    </location>
</feature>
<feature type="helix" evidence="7">
    <location>
        <begin position="23"/>
        <end position="30"/>
    </location>
</feature>
<name>THNC_VISAL</name>
<comment type="function">
    <text evidence="1">Thionins are small plant proteins which are toxic to animal cells. They seem to exert their toxic effect at the level of the cell membrane. Their precise function is not known.</text>
</comment>
<comment type="subunit">
    <text evidence="1">Monomer.</text>
</comment>
<comment type="subcellular location">
    <subcellularLocation>
        <location evidence="1">Secreted</location>
    </subcellularLocation>
</comment>
<comment type="mass spectrometry"/>
<comment type="similarity">
    <text evidence="3">Belongs to the plant thionin (TC 1.C.44) family.</text>
</comment>
<dbReference type="PDB" id="1ORL">
    <property type="method" value="NMR"/>
    <property type="chains" value="A=1-46"/>
</dbReference>
<dbReference type="PDB" id="3C8P">
    <property type="method" value="X-ray"/>
    <property type="resolution" value="1.25 A"/>
    <property type="chains" value="A/B=1-46"/>
</dbReference>
<dbReference type="PDBsum" id="1ORL"/>
<dbReference type="PDBsum" id="3C8P"/>
<dbReference type="SMR" id="P83554"/>
<dbReference type="EvolutionaryTrace" id="P83554"/>
<dbReference type="GO" id="GO:0005576">
    <property type="term" value="C:extracellular region"/>
    <property type="evidence" value="ECO:0007669"/>
    <property type="project" value="UniProtKB-SubCell"/>
</dbReference>
<dbReference type="GO" id="GO:0090729">
    <property type="term" value="F:toxin activity"/>
    <property type="evidence" value="ECO:0007669"/>
    <property type="project" value="UniProtKB-KW"/>
</dbReference>
<dbReference type="GO" id="GO:0006952">
    <property type="term" value="P:defense response"/>
    <property type="evidence" value="ECO:0007669"/>
    <property type="project" value="UniProtKB-KW"/>
</dbReference>
<dbReference type="FunFam" id="3.30.1350.10:FF:000001">
    <property type="entry name" value="Hellethionin-D"/>
    <property type="match status" value="1"/>
</dbReference>
<dbReference type="Gene3D" id="3.30.1350.10">
    <property type="entry name" value="Thionin-like"/>
    <property type="match status" value="1"/>
</dbReference>
<dbReference type="InterPro" id="IPR001010">
    <property type="entry name" value="Thionin"/>
</dbReference>
<dbReference type="InterPro" id="IPR036391">
    <property type="entry name" value="Thionin-like_sf"/>
</dbReference>
<dbReference type="PANTHER" id="PTHR33920">
    <property type="entry name" value="THIONIN-2.1-RELATED"/>
    <property type="match status" value="1"/>
</dbReference>
<dbReference type="PANTHER" id="PTHR33920:SF2">
    <property type="entry name" value="THIONIN-2.1-RELATED"/>
    <property type="match status" value="1"/>
</dbReference>
<dbReference type="Pfam" id="PF00321">
    <property type="entry name" value="Thionin"/>
    <property type="match status" value="1"/>
</dbReference>
<dbReference type="PRINTS" id="PR00287">
    <property type="entry name" value="THIONIN"/>
</dbReference>
<dbReference type="SUPFAM" id="SSF57429">
    <property type="entry name" value="Crambin-like"/>
    <property type="match status" value="1"/>
</dbReference>
<dbReference type="PROSITE" id="PS00271">
    <property type="entry name" value="THIONIN"/>
    <property type="match status" value="1"/>
</dbReference>
<accession>P83554</accession>
<proteinExistence type="evidence at protein level"/>
<reference evidence="4" key="1">
    <citation type="journal article" date="2003" name="Biochemistry">
        <title>NMR solution structure of viscotoxin C1 from Viscum album species Coloratum ohwi: toward a structure-function analysis of viscotoxins.</title>
        <authorList>
            <person name="Romagnoli S."/>
            <person name="Fogolari F."/>
            <person name="Catalano M."/>
            <person name="Zetta L."/>
            <person name="Schaller G."/>
            <person name="Urech K."/>
            <person name="Giannattasio M."/>
            <person name="Ragona L."/>
            <person name="Molinari H."/>
        </authorList>
    </citation>
    <scope>PROTEIN SEQUENCE</scope>
    <scope>FUNCTION</scope>
    <scope>SUBUNIT</scope>
    <scope>MASS SPECTROMETRY</scope>
    <scope>SUBCELLULAR LOCATION</scope>
    <scope>STRUCTURE BY NMR</scope>
    <source>
        <strain evidence="1">Subsp. coloratum</strain>
        <tissue evidence="1">Leaf</tissue>
    </source>
</reference>
<sequence>KSCCPNTTGRNIYNTCRFAGGSRERCAKLSGCKIISASTCPSDYPK</sequence>
<evidence type="ECO:0000269" key="1">
    <source>
    </source>
</evidence>
<evidence type="ECO:0000303" key="2">
    <source>
    </source>
</evidence>
<evidence type="ECO:0000305" key="3"/>
<evidence type="ECO:0000312" key="4">
    <source>
        <dbReference type="PDB" id="1ORL"/>
    </source>
</evidence>
<evidence type="ECO:0007744" key="5">
    <source>
        <dbReference type="PDB" id="1ORL"/>
    </source>
</evidence>
<evidence type="ECO:0007744" key="6">
    <source>
        <dbReference type="PDB" id="3C8P"/>
    </source>
</evidence>
<evidence type="ECO:0007829" key="7">
    <source>
        <dbReference type="PDB" id="1ORL"/>
    </source>
</evidence>
<keyword id="KW-0002">3D-structure</keyword>
<keyword id="KW-0903">Direct protein sequencing</keyword>
<keyword id="KW-1015">Disulfide bond</keyword>
<keyword id="KW-0611">Plant defense</keyword>
<keyword id="KW-0964">Secreted</keyword>
<keyword id="KW-0800">Toxin</keyword>
<protein>
    <recommendedName>
        <fullName evidence="2">Viscotoxin-C1</fullName>
    </recommendedName>
</protein>